<protein>
    <recommendedName>
        <fullName>Cytochrome b</fullName>
    </recommendedName>
    <alternativeName>
        <fullName>Complex III subunit 3</fullName>
    </alternativeName>
    <alternativeName>
        <fullName>Complex III subunit III</fullName>
    </alternativeName>
    <alternativeName>
        <fullName>Cytochrome b-c1 complex subunit 3</fullName>
    </alternativeName>
    <alternativeName>
        <fullName>Ubiquinol-cytochrome-c reductase complex cytochrome b subunit</fullName>
    </alternativeName>
</protein>
<sequence>MTYIRKTHPLMKIVNNAFIDLPAPSNISSWWNFGSLLGICLILQILTGLFLAMHYASDTTTAFSSVTHICRDVNYGWIIRYMHANGASMFFICLFMHVGRGLYYGSYTFLETWNIGVILLFTVMATAFVGYVLPWGQMSFWGATVITNLLSAIPYIGTNLVEWIWGGFSVDKATLTRFFAFHFILPFIITALAMIHLLFLHDTGSNNPTGIPSDADKIPFHPYYTIKDIMGVLLLIFFLMLLVLFAPDLLGDPDNYTPANPLNTPPHIKPEWYFLFAYAILRSIPNKLGGVLALVLSILVLILMPLLHTSKQRSMMFRPFSQCLFWALVADLLTLTWIGGQPVEYPFVVIGQLASILYFLIILVLMPIISTIENNLLKW</sequence>
<evidence type="ECO:0000250" key="1"/>
<evidence type="ECO:0000250" key="2">
    <source>
        <dbReference type="UniProtKB" id="P00157"/>
    </source>
</evidence>
<evidence type="ECO:0000255" key="3">
    <source>
        <dbReference type="PROSITE-ProRule" id="PRU00967"/>
    </source>
</evidence>
<evidence type="ECO:0000255" key="4">
    <source>
        <dbReference type="PROSITE-ProRule" id="PRU00968"/>
    </source>
</evidence>
<name>CYB_PUDPU</name>
<geneLocation type="mitochondrion"/>
<proteinExistence type="inferred from homology"/>
<dbReference type="EMBL" id="AY607039">
    <property type="protein sequence ID" value="AAU08749.1"/>
    <property type="molecule type" value="Genomic_DNA"/>
</dbReference>
<dbReference type="SMR" id="Q5UVI5"/>
<dbReference type="GO" id="GO:0005743">
    <property type="term" value="C:mitochondrial inner membrane"/>
    <property type="evidence" value="ECO:0007669"/>
    <property type="project" value="UniProtKB-SubCell"/>
</dbReference>
<dbReference type="GO" id="GO:0045275">
    <property type="term" value="C:respiratory chain complex III"/>
    <property type="evidence" value="ECO:0007669"/>
    <property type="project" value="InterPro"/>
</dbReference>
<dbReference type="GO" id="GO:0046872">
    <property type="term" value="F:metal ion binding"/>
    <property type="evidence" value="ECO:0007669"/>
    <property type="project" value="UniProtKB-KW"/>
</dbReference>
<dbReference type="GO" id="GO:0008121">
    <property type="term" value="F:ubiquinol-cytochrome-c reductase activity"/>
    <property type="evidence" value="ECO:0007669"/>
    <property type="project" value="InterPro"/>
</dbReference>
<dbReference type="GO" id="GO:0006122">
    <property type="term" value="P:mitochondrial electron transport, ubiquinol to cytochrome c"/>
    <property type="evidence" value="ECO:0007669"/>
    <property type="project" value="TreeGrafter"/>
</dbReference>
<dbReference type="CDD" id="cd00290">
    <property type="entry name" value="cytochrome_b_C"/>
    <property type="match status" value="1"/>
</dbReference>
<dbReference type="CDD" id="cd00284">
    <property type="entry name" value="Cytochrome_b_N"/>
    <property type="match status" value="1"/>
</dbReference>
<dbReference type="FunFam" id="1.20.810.10:FF:000002">
    <property type="entry name" value="Cytochrome b"/>
    <property type="match status" value="1"/>
</dbReference>
<dbReference type="Gene3D" id="1.20.810.10">
    <property type="entry name" value="Cytochrome Bc1 Complex, Chain C"/>
    <property type="match status" value="1"/>
</dbReference>
<dbReference type="InterPro" id="IPR005798">
    <property type="entry name" value="Cyt_b/b6_C"/>
</dbReference>
<dbReference type="InterPro" id="IPR036150">
    <property type="entry name" value="Cyt_b/b6_C_sf"/>
</dbReference>
<dbReference type="InterPro" id="IPR005797">
    <property type="entry name" value="Cyt_b/b6_N"/>
</dbReference>
<dbReference type="InterPro" id="IPR027387">
    <property type="entry name" value="Cytb/b6-like_sf"/>
</dbReference>
<dbReference type="InterPro" id="IPR030689">
    <property type="entry name" value="Cytochrome_b"/>
</dbReference>
<dbReference type="InterPro" id="IPR048260">
    <property type="entry name" value="Cytochrome_b_C_euk/bac"/>
</dbReference>
<dbReference type="InterPro" id="IPR048259">
    <property type="entry name" value="Cytochrome_b_N_euk/bac"/>
</dbReference>
<dbReference type="InterPro" id="IPR016174">
    <property type="entry name" value="Di-haem_cyt_TM"/>
</dbReference>
<dbReference type="PANTHER" id="PTHR19271">
    <property type="entry name" value="CYTOCHROME B"/>
    <property type="match status" value="1"/>
</dbReference>
<dbReference type="PANTHER" id="PTHR19271:SF16">
    <property type="entry name" value="CYTOCHROME B"/>
    <property type="match status" value="1"/>
</dbReference>
<dbReference type="Pfam" id="PF00032">
    <property type="entry name" value="Cytochrom_B_C"/>
    <property type="match status" value="1"/>
</dbReference>
<dbReference type="Pfam" id="PF00033">
    <property type="entry name" value="Cytochrome_B"/>
    <property type="match status" value="1"/>
</dbReference>
<dbReference type="PIRSF" id="PIRSF038885">
    <property type="entry name" value="COB"/>
    <property type="match status" value="1"/>
</dbReference>
<dbReference type="SUPFAM" id="SSF81648">
    <property type="entry name" value="a domain/subunit of cytochrome bc1 complex (Ubiquinol-cytochrome c reductase)"/>
    <property type="match status" value="1"/>
</dbReference>
<dbReference type="SUPFAM" id="SSF81342">
    <property type="entry name" value="Transmembrane di-heme cytochromes"/>
    <property type="match status" value="1"/>
</dbReference>
<dbReference type="PROSITE" id="PS51003">
    <property type="entry name" value="CYTB_CTER"/>
    <property type="match status" value="1"/>
</dbReference>
<dbReference type="PROSITE" id="PS51002">
    <property type="entry name" value="CYTB_NTER"/>
    <property type="match status" value="1"/>
</dbReference>
<comment type="function">
    <text evidence="2">Component of the ubiquinol-cytochrome c reductase complex (complex III or cytochrome b-c1 complex) that is part of the mitochondrial respiratory chain. The b-c1 complex mediates electron transfer from ubiquinol to cytochrome c. Contributes to the generation of a proton gradient across the mitochondrial membrane that is then used for ATP synthesis.</text>
</comment>
<comment type="cofactor">
    <cofactor evidence="2">
        <name>heme b</name>
        <dbReference type="ChEBI" id="CHEBI:60344"/>
    </cofactor>
    <text evidence="2">Binds 2 heme b groups non-covalently.</text>
</comment>
<comment type="subunit">
    <text evidence="2">The cytochrome bc1 complex contains 11 subunits: 3 respiratory subunits (MT-CYB, CYC1 and UQCRFS1), 2 core proteins (UQCRC1 and UQCRC2) and 6 low-molecular weight proteins (UQCRH/QCR6, UQCRB/QCR7, UQCRQ/QCR8, UQCR10/QCR9, UQCR11/QCR10 and a cleavage product of UQCRFS1). This cytochrome bc1 complex then forms a dimer.</text>
</comment>
<comment type="subcellular location">
    <subcellularLocation>
        <location evidence="2">Mitochondrion inner membrane</location>
        <topology evidence="2">Multi-pass membrane protein</topology>
    </subcellularLocation>
</comment>
<comment type="miscellaneous">
    <text evidence="1">Heme 1 (or BL or b562) is low-potential and absorbs at about 562 nm, and heme 2 (or BH or b566) is high-potential and absorbs at about 566 nm.</text>
</comment>
<comment type="similarity">
    <text evidence="3 4">Belongs to the cytochrome b family.</text>
</comment>
<comment type="caution">
    <text evidence="2">The full-length protein contains only eight transmembrane helices, not nine as predicted by bioinformatics tools.</text>
</comment>
<accession>Q5UVI5</accession>
<feature type="chain" id="PRO_0000061469" description="Cytochrome b">
    <location>
        <begin position="1"/>
        <end position="379"/>
    </location>
</feature>
<feature type="transmembrane region" description="Helical" evidence="2">
    <location>
        <begin position="33"/>
        <end position="53"/>
    </location>
</feature>
<feature type="transmembrane region" description="Helical" evidence="2">
    <location>
        <begin position="77"/>
        <end position="98"/>
    </location>
</feature>
<feature type="transmembrane region" description="Helical" evidence="2">
    <location>
        <begin position="113"/>
        <end position="133"/>
    </location>
</feature>
<feature type="transmembrane region" description="Helical" evidence="2">
    <location>
        <begin position="178"/>
        <end position="198"/>
    </location>
</feature>
<feature type="transmembrane region" description="Helical" evidence="2">
    <location>
        <begin position="226"/>
        <end position="246"/>
    </location>
</feature>
<feature type="transmembrane region" description="Helical" evidence="2">
    <location>
        <begin position="288"/>
        <end position="308"/>
    </location>
</feature>
<feature type="transmembrane region" description="Helical" evidence="2">
    <location>
        <begin position="320"/>
        <end position="340"/>
    </location>
</feature>
<feature type="transmembrane region" description="Helical" evidence="2">
    <location>
        <begin position="347"/>
        <end position="367"/>
    </location>
</feature>
<feature type="binding site" description="axial binding residue" evidence="2">
    <location>
        <position position="83"/>
    </location>
    <ligand>
        <name>heme b</name>
        <dbReference type="ChEBI" id="CHEBI:60344"/>
        <label>b562</label>
    </ligand>
    <ligandPart>
        <name>Fe</name>
        <dbReference type="ChEBI" id="CHEBI:18248"/>
    </ligandPart>
</feature>
<feature type="binding site" description="axial binding residue" evidence="2">
    <location>
        <position position="97"/>
    </location>
    <ligand>
        <name>heme b</name>
        <dbReference type="ChEBI" id="CHEBI:60344"/>
        <label>b566</label>
    </ligand>
    <ligandPart>
        <name>Fe</name>
        <dbReference type="ChEBI" id="CHEBI:18248"/>
    </ligandPart>
</feature>
<feature type="binding site" description="axial binding residue" evidence="2">
    <location>
        <position position="182"/>
    </location>
    <ligand>
        <name>heme b</name>
        <dbReference type="ChEBI" id="CHEBI:60344"/>
        <label>b562</label>
    </ligand>
    <ligandPart>
        <name>Fe</name>
        <dbReference type="ChEBI" id="CHEBI:18248"/>
    </ligandPart>
</feature>
<feature type="binding site" description="axial binding residue" evidence="2">
    <location>
        <position position="196"/>
    </location>
    <ligand>
        <name>heme b</name>
        <dbReference type="ChEBI" id="CHEBI:60344"/>
        <label>b566</label>
    </ligand>
    <ligandPart>
        <name>Fe</name>
        <dbReference type="ChEBI" id="CHEBI:18248"/>
    </ligandPart>
</feature>
<feature type="binding site" evidence="2">
    <location>
        <position position="201"/>
    </location>
    <ligand>
        <name>a ubiquinone</name>
        <dbReference type="ChEBI" id="CHEBI:16389"/>
    </ligand>
</feature>
<reference key="1">
    <citation type="journal article" date="2004" name="Mol. Phylogenet. Evol.">
        <title>Evolution and phylogeny of old world deer.</title>
        <authorList>
            <person name="Pitra C."/>
            <person name="Fickel J."/>
            <person name="Meijaard E."/>
            <person name="Groves P.C."/>
        </authorList>
    </citation>
    <scope>NUCLEOTIDE SEQUENCE [GENOMIC DNA]</scope>
</reference>
<gene>
    <name type="primary">MT-CYB</name>
    <name type="synonym">COB</name>
    <name type="synonym">CYTB</name>
    <name type="synonym">MTCYB</name>
</gene>
<keyword id="KW-0249">Electron transport</keyword>
<keyword id="KW-0349">Heme</keyword>
<keyword id="KW-0408">Iron</keyword>
<keyword id="KW-0472">Membrane</keyword>
<keyword id="KW-0479">Metal-binding</keyword>
<keyword id="KW-0496">Mitochondrion</keyword>
<keyword id="KW-0999">Mitochondrion inner membrane</keyword>
<keyword id="KW-0679">Respiratory chain</keyword>
<keyword id="KW-0812">Transmembrane</keyword>
<keyword id="KW-1133">Transmembrane helix</keyword>
<keyword id="KW-0813">Transport</keyword>
<keyword id="KW-0830">Ubiquinone</keyword>
<organism>
    <name type="scientific">Pudu puda</name>
    <name type="common">Southern pudu</name>
    <dbReference type="NCBI Taxonomy" id="163861"/>
    <lineage>
        <taxon>Eukaryota</taxon>
        <taxon>Metazoa</taxon>
        <taxon>Chordata</taxon>
        <taxon>Craniata</taxon>
        <taxon>Vertebrata</taxon>
        <taxon>Euteleostomi</taxon>
        <taxon>Mammalia</taxon>
        <taxon>Eutheria</taxon>
        <taxon>Laurasiatheria</taxon>
        <taxon>Artiodactyla</taxon>
        <taxon>Ruminantia</taxon>
        <taxon>Pecora</taxon>
        <taxon>Cervidae</taxon>
        <taxon>Odocoileinae</taxon>
        <taxon>Pudu</taxon>
    </lineage>
</organism>